<organism>
    <name type="scientific">Rhodopseudomonas palustris (strain BisA53)</name>
    <dbReference type="NCBI Taxonomy" id="316055"/>
    <lineage>
        <taxon>Bacteria</taxon>
        <taxon>Pseudomonadati</taxon>
        <taxon>Pseudomonadota</taxon>
        <taxon>Alphaproteobacteria</taxon>
        <taxon>Hyphomicrobiales</taxon>
        <taxon>Nitrobacteraceae</taxon>
        <taxon>Rhodopseudomonas</taxon>
    </lineage>
</organism>
<gene>
    <name evidence="1" type="primary">aroA</name>
    <name type="ordered locus">RPE_0444</name>
</gene>
<sequence length="445" mass="46582">MTHSVQPTPLQARKSPALQGRVRVPGDKSISHRALILGALSVGETTITGLLEGEDVLNTAKAMQALGAKVERTGEFAWRVNGVGVGGFAQPDAALDFGNSGTGCRLVMGAVAGCPIAATFDGDASLRSRPMKRIVDPLQLMGASVIASAEGGKLPLTLQGAKNPLPIEYRTPVASAQIKSAVLLAGLSAPGVTTVIEQEASRDHTELMLQHFGAQIVSVPEGVHGRKISLTGQPELRGAPVVVPADPSSAAFPMVAALIVPGSDLVLTDVMTNPLRTGLFATLREMGASIEESELRDDAGEPMATFRVRASKLKGVTVPPERAPSMIDEYLVLAVAAAFAEGTTRMRGLQELRVKESDRLEATAAMLRVNGVDVAIEGDDLIVEGRGHVPGGGLVATHMDHRIAMSALVMGLASDQPVQVDDTAFIATSFPDFIPMMRRLGADFA</sequence>
<accession>Q07UI1</accession>
<reference key="1">
    <citation type="submission" date="2006-09" db="EMBL/GenBank/DDBJ databases">
        <title>Complete sequence of Rhodopseudomonas palustris BisA53.</title>
        <authorList>
            <consortium name="US DOE Joint Genome Institute"/>
            <person name="Copeland A."/>
            <person name="Lucas S."/>
            <person name="Lapidus A."/>
            <person name="Barry K."/>
            <person name="Detter J.C."/>
            <person name="Glavina del Rio T."/>
            <person name="Hammon N."/>
            <person name="Israni S."/>
            <person name="Dalin E."/>
            <person name="Tice H."/>
            <person name="Pitluck S."/>
            <person name="Chain P."/>
            <person name="Malfatti S."/>
            <person name="Shin M."/>
            <person name="Vergez L."/>
            <person name="Schmutz J."/>
            <person name="Larimer F."/>
            <person name="Land M."/>
            <person name="Hauser L."/>
            <person name="Pelletier D.A."/>
            <person name="Kyrpides N."/>
            <person name="Kim E."/>
            <person name="Harwood C.S."/>
            <person name="Oda Y."/>
            <person name="Richardson P."/>
        </authorList>
    </citation>
    <scope>NUCLEOTIDE SEQUENCE [LARGE SCALE GENOMIC DNA]</scope>
    <source>
        <strain>BisA53</strain>
    </source>
</reference>
<feature type="chain" id="PRO_1000058608" description="3-phosphoshikimate 1-carboxyvinyltransferase">
    <location>
        <begin position="1"/>
        <end position="445"/>
    </location>
</feature>
<feature type="active site" description="Proton acceptor" evidence="1">
    <location>
        <position position="328"/>
    </location>
</feature>
<feature type="binding site" evidence="1">
    <location>
        <position position="28"/>
    </location>
    <ligand>
        <name>3-phosphoshikimate</name>
        <dbReference type="ChEBI" id="CHEBI:145989"/>
    </ligand>
</feature>
<feature type="binding site" evidence="1">
    <location>
        <position position="28"/>
    </location>
    <ligand>
        <name>phosphoenolpyruvate</name>
        <dbReference type="ChEBI" id="CHEBI:58702"/>
    </ligand>
</feature>
<feature type="binding site" evidence="1">
    <location>
        <position position="29"/>
    </location>
    <ligand>
        <name>3-phosphoshikimate</name>
        <dbReference type="ChEBI" id="CHEBI:145989"/>
    </ligand>
</feature>
<feature type="binding site" evidence="1">
    <location>
        <position position="33"/>
    </location>
    <ligand>
        <name>3-phosphoshikimate</name>
        <dbReference type="ChEBI" id="CHEBI:145989"/>
    </ligand>
</feature>
<feature type="binding site" evidence="1">
    <location>
        <position position="101"/>
    </location>
    <ligand>
        <name>phosphoenolpyruvate</name>
        <dbReference type="ChEBI" id="CHEBI:58702"/>
    </ligand>
</feature>
<feature type="binding site" evidence="1">
    <location>
        <position position="129"/>
    </location>
    <ligand>
        <name>phosphoenolpyruvate</name>
        <dbReference type="ChEBI" id="CHEBI:58702"/>
    </ligand>
</feature>
<feature type="binding site" evidence="1">
    <location>
        <position position="175"/>
    </location>
    <ligand>
        <name>3-phosphoshikimate</name>
        <dbReference type="ChEBI" id="CHEBI:145989"/>
    </ligand>
</feature>
<feature type="binding site" evidence="1">
    <location>
        <position position="177"/>
    </location>
    <ligand>
        <name>3-phosphoshikimate</name>
        <dbReference type="ChEBI" id="CHEBI:145989"/>
    </ligand>
</feature>
<feature type="binding site" evidence="1">
    <location>
        <position position="177"/>
    </location>
    <ligand>
        <name>phosphoenolpyruvate</name>
        <dbReference type="ChEBI" id="CHEBI:58702"/>
    </ligand>
</feature>
<feature type="binding site" evidence="1">
    <location>
        <position position="328"/>
    </location>
    <ligand>
        <name>3-phosphoshikimate</name>
        <dbReference type="ChEBI" id="CHEBI:145989"/>
    </ligand>
</feature>
<feature type="binding site" evidence="1">
    <location>
        <position position="355"/>
    </location>
    <ligand>
        <name>3-phosphoshikimate</name>
        <dbReference type="ChEBI" id="CHEBI:145989"/>
    </ligand>
</feature>
<feature type="binding site" evidence="1">
    <location>
        <position position="359"/>
    </location>
    <ligand>
        <name>phosphoenolpyruvate</name>
        <dbReference type="ChEBI" id="CHEBI:58702"/>
    </ligand>
</feature>
<feature type="binding site" evidence="1">
    <location>
        <position position="402"/>
    </location>
    <ligand>
        <name>phosphoenolpyruvate</name>
        <dbReference type="ChEBI" id="CHEBI:58702"/>
    </ligand>
</feature>
<dbReference type="EC" id="2.5.1.19" evidence="1"/>
<dbReference type="EMBL" id="CP000463">
    <property type="protein sequence ID" value="ABJ04403.1"/>
    <property type="molecule type" value="Genomic_DNA"/>
</dbReference>
<dbReference type="SMR" id="Q07UI1"/>
<dbReference type="STRING" id="316055.RPE_0444"/>
<dbReference type="KEGG" id="rpe:RPE_0444"/>
<dbReference type="eggNOG" id="COG0128">
    <property type="taxonomic scope" value="Bacteria"/>
</dbReference>
<dbReference type="HOGENOM" id="CLU_024321_0_1_5"/>
<dbReference type="OrthoDB" id="9809920at2"/>
<dbReference type="UniPathway" id="UPA00053">
    <property type="reaction ID" value="UER00089"/>
</dbReference>
<dbReference type="GO" id="GO:0005737">
    <property type="term" value="C:cytoplasm"/>
    <property type="evidence" value="ECO:0007669"/>
    <property type="project" value="UniProtKB-SubCell"/>
</dbReference>
<dbReference type="GO" id="GO:0003866">
    <property type="term" value="F:3-phosphoshikimate 1-carboxyvinyltransferase activity"/>
    <property type="evidence" value="ECO:0007669"/>
    <property type="project" value="UniProtKB-UniRule"/>
</dbReference>
<dbReference type="GO" id="GO:0008652">
    <property type="term" value="P:amino acid biosynthetic process"/>
    <property type="evidence" value="ECO:0007669"/>
    <property type="project" value="UniProtKB-KW"/>
</dbReference>
<dbReference type="GO" id="GO:0009073">
    <property type="term" value="P:aromatic amino acid family biosynthetic process"/>
    <property type="evidence" value="ECO:0007669"/>
    <property type="project" value="UniProtKB-KW"/>
</dbReference>
<dbReference type="GO" id="GO:0009423">
    <property type="term" value="P:chorismate biosynthetic process"/>
    <property type="evidence" value="ECO:0007669"/>
    <property type="project" value="UniProtKB-UniRule"/>
</dbReference>
<dbReference type="CDD" id="cd01556">
    <property type="entry name" value="EPSP_synthase"/>
    <property type="match status" value="1"/>
</dbReference>
<dbReference type="FunFam" id="3.65.10.10:FF:000005">
    <property type="entry name" value="3-phosphoshikimate 1-carboxyvinyltransferase"/>
    <property type="match status" value="1"/>
</dbReference>
<dbReference type="FunFam" id="3.65.10.10:FF:000006">
    <property type="entry name" value="3-phosphoshikimate 1-carboxyvinyltransferase"/>
    <property type="match status" value="1"/>
</dbReference>
<dbReference type="Gene3D" id="3.65.10.10">
    <property type="entry name" value="Enolpyruvate transferase domain"/>
    <property type="match status" value="2"/>
</dbReference>
<dbReference type="HAMAP" id="MF_00210">
    <property type="entry name" value="EPSP_synth"/>
    <property type="match status" value="1"/>
</dbReference>
<dbReference type="InterPro" id="IPR001986">
    <property type="entry name" value="Enolpyruvate_Tfrase_dom"/>
</dbReference>
<dbReference type="InterPro" id="IPR036968">
    <property type="entry name" value="Enolpyruvate_Tfrase_sf"/>
</dbReference>
<dbReference type="InterPro" id="IPR006264">
    <property type="entry name" value="EPSP_synthase"/>
</dbReference>
<dbReference type="InterPro" id="IPR023193">
    <property type="entry name" value="EPSP_synthase_CS"/>
</dbReference>
<dbReference type="InterPro" id="IPR013792">
    <property type="entry name" value="RNA3'P_cycl/enolpyr_Trfase_a/b"/>
</dbReference>
<dbReference type="NCBIfam" id="TIGR01356">
    <property type="entry name" value="aroA"/>
    <property type="match status" value="1"/>
</dbReference>
<dbReference type="PANTHER" id="PTHR21090">
    <property type="entry name" value="AROM/DEHYDROQUINATE SYNTHASE"/>
    <property type="match status" value="1"/>
</dbReference>
<dbReference type="PANTHER" id="PTHR21090:SF5">
    <property type="entry name" value="PENTAFUNCTIONAL AROM POLYPEPTIDE"/>
    <property type="match status" value="1"/>
</dbReference>
<dbReference type="Pfam" id="PF00275">
    <property type="entry name" value="EPSP_synthase"/>
    <property type="match status" value="1"/>
</dbReference>
<dbReference type="PIRSF" id="PIRSF000505">
    <property type="entry name" value="EPSPS"/>
    <property type="match status" value="1"/>
</dbReference>
<dbReference type="SUPFAM" id="SSF55205">
    <property type="entry name" value="EPT/RTPC-like"/>
    <property type="match status" value="1"/>
</dbReference>
<dbReference type="PROSITE" id="PS00104">
    <property type="entry name" value="EPSP_SYNTHASE_1"/>
    <property type="match status" value="1"/>
</dbReference>
<dbReference type="PROSITE" id="PS00885">
    <property type="entry name" value="EPSP_SYNTHASE_2"/>
    <property type="match status" value="1"/>
</dbReference>
<keyword id="KW-0028">Amino-acid biosynthesis</keyword>
<keyword id="KW-0057">Aromatic amino acid biosynthesis</keyword>
<keyword id="KW-0963">Cytoplasm</keyword>
<keyword id="KW-0808">Transferase</keyword>
<comment type="function">
    <text evidence="1">Catalyzes the transfer of the enolpyruvyl moiety of phosphoenolpyruvate (PEP) to the 5-hydroxyl of shikimate-3-phosphate (S3P) to produce enolpyruvyl shikimate-3-phosphate and inorganic phosphate.</text>
</comment>
<comment type="catalytic activity">
    <reaction evidence="1">
        <text>3-phosphoshikimate + phosphoenolpyruvate = 5-O-(1-carboxyvinyl)-3-phosphoshikimate + phosphate</text>
        <dbReference type="Rhea" id="RHEA:21256"/>
        <dbReference type="ChEBI" id="CHEBI:43474"/>
        <dbReference type="ChEBI" id="CHEBI:57701"/>
        <dbReference type="ChEBI" id="CHEBI:58702"/>
        <dbReference type="ChEBI" id="CHEBI:145989"/>
        <dbReference type="EC" id="2.5.1.19"/>
    </reaction>
    <physiologicalReaction direction="left-to-right" evidence="1">
        <dbReference type="Rhea" id="RHEA:21257"/>
    </physiologicalReaction>
</comment>
<comment type="pathway">
    <text evidence="1">Metabolic intermediate biosynthesis; chorismate biosynthesis; chorismate from D-erythrose 4-phosphate and phosphoenolpyruvate: step 6/7.</text>
</comment>
<comment type="subunit">
    <text evidence="1">Monomer.</text>
</comment>
<comment type="subcellular location">
    <subcellularLocation>
        <location evidence="1">Cytoplasm</location>
    </subcellularLocation>
</comment>
<comment type="similarity">
    <text evidence="1">Belongs to the EPSP synthase family.</text>
</comment>
<proteinExistence type="inferred from homology"/>
<protein>
    <recommendedName>
        <fullName evidence="1">3-phosphoshikimate 1-carboxyvinyltransferase</fullName>
        <ecNumber evidence="1">2.5.1.19</ecNumber>
    </recommendedName>
    <alternativeName>
        <fullName evidence="1">5-enolpyruvylshikimate-3-phosphate synthase</fullName>
        <shortName evidence="1">EPSP synthase</shortName>
        <shortName evidence="1">EPSPS</shortName>
    </alternativeName>
</protein>
<name>AROA_RHOP5</name>
<evidence type="ECO:0000255" key="1">
    <source>
        <dbReference type="HAMAP-Rule" id="MF_00210"/>
    </source>
</evidence>